<keyword id="KW-0134">Cell wall</keyword>
<keyword id="KW-0961">Cell wall biogenesis/degradation</keyword>
<keyword id="KW-0903">Direct protein sequencing</keyword>
<keyword id="KW-0964">Secreted</keyword>
<dbReference type="EMBL" id="X77045">
    <property type="protein sequence ID" value="CAA54334.1"/>
    <property type="molecule type" value="mRNA"/>
</dbReference>
<dbReference type="EMBL" id="X68372">
    <property type="protein sequence ID" value="CAA48452.1"/>
    <property type="molecule type" value="Genomic_DNA"/>
</dbReference>
<dbReference type="PIR" id="JC4088">
    <property type="entry name" value="JC4088"/>
</dbReference>
<dbReference type="GO" id="GO:0005576">
    <property type="term" value="C:extracellular region"/>
    <property type="evidence" value="ECO:0007669"/>
    <property type="project" value="UniProtKB-KW"/>
</dbReference>
<dbReference type="GO" id="GO:0071555">
    <property type="term" value="P:cell wall organization"/>
    <property type="evidence" value="ECO:0007669"/>
    <property type="project" value="UniProtKB-KW"/>
</dbReference>
<evidence type="ECO:0000256" key="1">
    <source>
        <dbReference type="SAM" id="MobiDB-lite"/>
    </source>
</evidence>
<evidence type="ECO:0000305" key="2"/>
<reference key="1">
    <citation type="journal article" date="1995" name="Gene">
        <title>Complete sequence of the gene encoding a chorionic gonadotropin-like protein from Xanthomonas maltophilia.</title>
        <authorList>
            <person name="Grover S."/>
            <person name="Woodward S.R."/>
            <person name="Odell W.D."/>
        </authorList>
    </citation>
    <scope>NUCLEOTIDE SEQUENCE [GENOMIC DNA]</scope>
    <source>
        <strain>ATCC 13637 / NCIB 9203 / NCPPB 1974 / NCTC 10257</strain>
    </source>
</reference>
<reference key="2">
    <citation type="journal article" date="1993" name="Biochem. Biophys. Res. Commun.">
        <title>A bacterial protein has homology with human chorionic gonadotropin (hCG).</title>
        <authorList>
            <person name="Grover S."/>
            <person name="Woodward S.R."/>
            <person name="Odell W.D."/>
        </authorList>
    </citation>
    <scope>NUCLEOTIDE SEQUENCE [GENOMIC DNA] OF 31-193</scope>
    <scope>PARTIAL PROTEIN SEQUENCE</scope>
    <source>
        <strain>ATCC 13637 / NCIB 9203 / NCPPB 1974 / NCTC 10257</strain>
    </source>
</reference>
<organism>
    <name type="scientific">Stenotrophomonas maltophilia</name>
    <name type="common">Pseudomonas maltophilia</name>
    <name type="synonym">Xanthomonas maltophilia</name>
    <dbReference type="NCBI Taxonomy" id="40324"/>
    <lineage>
        <taxon>Bacteria</taxon>
        <taxon>Pseudomonadati</taxon>
        <taxon>Pseudomonadota</taxon>
        <taxon>Gammaproteobacteria</taxon>
        <taxon>Lysobacterales</taxon>
        <taxon>Lysobacteraceae</taxon>
        <taxon>Stenotrophomonas</taxon>
        <taxon>Stenotrophomonas maltophilia group</taxon>
    </lineage>
</organism>
<sequence length="443" mass="49051">MRPWVPVTGASPHAAVGPAWTTGRRCVGVVTTWWWSVSYVERQVQIIDSLYRAMDASAENGYTDAACRFRYLPEEDGSLGIDSSFFYTIGGVSVSALLNDYGDKGCADLVYDLHDVMYKDIRFGESIRSRMCPRGVNPVPSAPTAPPAGLAAFPSANRRTERCLVWIACVHRLSAVGEAGSLNEPEAARLANDPAEHSNRHVDALGRQQLVCAHVVAGVASDGFGVRAGEERTGARGRHSGSIKPLDNLVVETPIEAARSRHRCAGRPCPRRHRRPCNASKSHRPMRMQQRDRGWTVWQKDFSMLTPLSAGFQHRVLAQQLVARRGRMQPSVVQIGVGRIRADVAGRVAGQDALGRIGRILPNAVARLSIAVRFLRAQSINHSIQSKRDRRSWNGCSKGQRRRGFISIDKKPGPKNKLALMFIREPDRFISIDRNPARRTSWL</sequence>
<feature type="chain" id="PRO_0000089602" description="Chorionicgonadotropic hormone-like protein">
    <location>
        <begin position="1"/>
        <end position="443"/>
    </location>
</feature>
<feature type="region of interest" description="Disordered" evidence="1">
    <location>
        <begin position="263"/>
        <end position="292"/>
    </location>
</feature>
<feature type="compositionally biased region" description="Basic residues" evidence="1">
    <location>
        <begin position="263"/>
        <end position="286"/>
    </location>
</feature>
<feature type="sequence conflict" description="In Ref. 2; CAA48452." evidence="2" ref="2">
    <original>N</original>
    <variation>K</variation>
    <location>
        <position position="137"/>
    </location>
</feature>
<protein>
    <recommendedName>
        <fullName>Chorionicgonadotropic hormone-like protein</fullName>
        <shortName>CG-like protein</shortName>
    </recommendedName>
</protein>
<proteinExistence type="evidence at protein level"/>
<gene>
    <name type="primary">xcg</name>
</gene>
<name>CGLH_STEMA</name>
<accession>P37126</accession>
<comment type="function">
    <text>Cell wall protein that resembles the beta subunit of human chorionic gonadotropin. Stimulates growth and change in morphology.</text>
</comment>
<comment type="subcellular location">
    <subcellularLocation>
        <location>Secreted</location>
        <location>Cell wall</location>
    </subcellularLocation>
</comment>
<comment type="similarity">
    <text evidence="2">To mammalian CGHB.</text>
</comment>